<protein>
    <recommendedName>
        <fullName evidence="7">Globin-related protein glb-13</fullName>
    </recommendedName>
</protein>
<evidence type="ECO:0000255" key="1">
    <source>
        <dbReference type="PROSITE-ProRule" id="PRU00238"/>
    </source>
</evidence>
<evidence type="ECO:0000255" key="2">
    <source>
        <dbReference type="RuleBase" id="RU000356"/>
    </source>
</evidence>
<evidence type="ECO:0000256" key="3">
    <source>
        <dbReference type="SAM" id="MobiDB-lite"/>
    </source>
</evidence>
<evidence type="ECO:0000269" key="4">
    <source>
    </source>
</evidence>
<evidence type="ECO:0000305" key="5"/>
<evidence type="ECO:0000312" key="6">
    <source>
        <dbReference type="Proteomes" id="UP000001940"/>
    </source>
</evidence>
<evidence type="ECO:0000312" key="7">
    <source>
        <dbReference type="WormBase" id="F19H6.2"/>
    </source>
</evidence>
<reference evidence="6" key="1">
    <citation type="journal article" date="1998" name="Science">
        <title>Genome sequence of the nematode C. elegans: a platform for investigating biology.</title>
        <authorList>
            <consortium name="The C. elegans sequencing consortium"/>
        </authorList>
    </citation>
    <scope>NUCLEOTIDE SEQUENCE [LARGE SCALE GENOMIC DNA]</scope>
    <source>
        <strain evidence="6">Bristol N2</strain>
    </source>
</reference>
<reference evidence="5" key="2">
    <citation type="journal article" date="2013" name="IUBMB Life">
        <title>GLB-13 is associated with oxidative stress resistance in Caenorhabditis elegans.</title>
        <authorList>
            <person name="Ren C."/>
            <person name="Li Y."/>
            <person name="Han R."/>
            <person name="Gao D."/>
            <person name="Li W."/>
            <person name="Shi J."/>
            <person name="Hoogewijs D."/>
            <person name="Braeckman B.P."/>
            <person name="De Henau S."/>
            <person name="Lu Y."/>
            <person name="Qu W."/>
            <person name="Gao Y."/>
            <person name="Wu Y."/>
            <person name="Li Z."/>
            <person name="Liu H."/>
            <person name="Wang Z."/>
            <person name="Zhang C."/>
        </authorList>
    </citation>
    <scope>FUNCTION</scope>
    <scope>INDUCTION</scope>
</reference>
<dbReference type="EMBL" id="BX284606">
    <property type="protein sequence ID" value="CAA92164.2"/>
    <property type="molecule type" value="Genomic_DNA"/>
</dbReference>
<dbReference type="RefSeq" id="NP_510079.2">
    <property type="nucleotide sequence ID" value="NM_077678.8"/>
</dbReference>
<dbReference type="SMR" id="Q19601"/>
<dbReference type="STRING" id="6239.F19H6.2.1"/>
<dbReference type="PaxDb" id="6239-F19H6.2"/>
<dbReference type="PeptideAtlas" id="Q19601"/>
<dbReference type="EnsemblMetazoa" id="F19H6.2.1">
    <property type="protein sequence ID" value="F19H6.2.1"/>
    <property type="gene ID" value="WBGene00008957"/>
</dbReference>
<dbReference type="GeneID" id="184697"/>
<dbReference type="KEGG" id="cel:CELE_F19H6.2"/>
<dbReference type="UCSC" id="F19H6.2">
    <property type="organism name" value="c. elegans"/>
</dbReference>
<dbReference type="AGR" id="WB:WBGene00008957"/>
<dbReference type="CTD" id="184697"/>
<dbReference type="WormBase" id="F19H6.2">
    <property type="protein sequence ID" value="CE45748"/>
    <property type="gene ID" value="WBGene00008957"/>
    <property type="gene designation" value="glb-13"/>
</dbReference>
<dbReference type="eggNOG" id="KOG3378">
    <property type="taxonomic scope" value="Eukaryota"/>
</dbReference>
<dbReference type="HOGENOM" id="CLU_086153_0_0_1"/>
<dbReference type="InParanoid" id="Q19601"/>
<dbReference type="OMA" id="GYWETFA"/>
<dbReference type="OrthoDB" id="5825062at2759"/>
<dbReference type="PhylomeDB" id="Q19601"/>
<dbReference type="PRO" id="PR:Q19601"/>
<dbReference type="Proteomes" id="UP000001940">
    <property type="component" value="Chromosome X"/>
</dbReference>
<dbReference type="Bgee" id="WBGene00008957">
    <property type="expression patterns" value="Expressed in larva and 3 other cell types or tissues"/>
</dbReference>
<dbReference type="GO" id="GO:0020037">
    <property type="term" value="F:heme binding"/>
    <property type="evidence" value="ECO:0007669"/>
    <property type="project" value="InterPro"/>
</dbReference>
<dbReference type="GO" id="GO:0046872">
    <property type="term" value="F:metal ion binding"/>
    <property type="evidence" value="ECO:0007669"/>
    <property type="project" value="UniProtKB-KW"/>
</dbReference>
<dbReference type="GO" id="GO:0019825">
    <property type="term" value="F:oxygen binding"/>
    <property type="evidence" value="ECO:0007669"/>
    <property type="project" value="InterPro"/>
</dbReference>
<dbReference type="GO" id="GO:0005344">
    <property type="term" value="F:oxygen carrier activity"/>
    <property type="evidence" value="ECO:0007669"/>
    <property type="project" value="UniProtKB-KW"/>
</dbReference>
<dbReference type="CDD" id="cd01040">
    <property type="entry name" value="Mb-like"/>
    <property type="match status" value="1"/>
</dbReference>
<dbReference type="Gene3D" id="1.10.490.10">
    <property type="entry name" value="Globins"/>
    <property type="match status" value="1"/>
</dbReference>
<dbReference type="InterPro" id="IPR000971">
    <property type="entry name" value="Globin"/>
</dbReference>
<dbReference type="InterPro" id="IPR009050">
    <property type="entry name" value="Globin-like_sf"/>
</dbReference>
<dbReference type="InterPro" id="IPR012292">
    <property type="entry name" value="Globin/Proto"/>
</dbReference>
<dbReference type="InterPro" id="IPR044399">
    <property type="entry name" value="Mb-like_M"/>
</dbReference>
<dbReference type="InterPro" id="IPR053341">
    <property type="entry name" value="Oxidative_stress_globin-like"/>
</dbReference>
<dbReference type="PANTHER" id="PTHR47768">
    <property type="entry name" value="GLOBIN RELATED-RELATED"/>
    <property type="match status" value="1"/>
</dbReference>
<dbReference type="PANTHER" id="PTHR47768:SF2">
    <property type="entry name" value="GLOBIN-RELATED"/>
    <property type="match status" value="1"/>
</dbReference>
<dbReference type="Pfam" id="PF00042">
    <property type="entry name" value="Globin"/>
    <property type="match status" value="1"/>
</dbReference>
<dbReference type="SUPFAM" id="SSF46458">
    <property type="entry name" value="Globin-like"/>
    <property type="match status" value="1"/>
</dbReference>
<dbReference type="PROSITE" id="PS01033">
    <property type="entry name" value="GLOBIN"/>
    <property type="match status" value="1"/>
</dbReference>
<keyword id="KW-0349">Heme</keyword>
<keyword id="KW-0408">Iron</keyword>
<keyword id="KW-0479">Metal-binding</keyword>
<keyword id="KW-0561">Oxygen transport</keyword>
<keyword id="KW-1185">Reference proteome</keyword>
<keyword id="KW-0813">Transport</keyword>
<sequence length="282" mass="32040">MGQENSKCPHQSLAEKRYKVERPKTKKVSSGSATERCLSTQSDEKNAARRLTVSSCDVSAEDDLPEIKKLSVCEPNEDEATSMTNAAAAAGGAKSKCKHFLTRRERILLEQSWRKTRKTGADHIGSKIFFMVLTAQPDIKAIFGLEKIPTGRLKYDPRFRQHALVYTKTLDFVIRNLDYPGKLEVYFENLGKRHVAMQGRGFEPGYWETFAECMTQAAVEWEANRQRPTLGAWRNLISCIISFMRRGFDEENGKKKQYSYNVQGFSSNRARRSISPYAPGVH</sequence>
<comment type="function">
    <text evidence="4">Involved in oxidative stress resistance.</text>
</comment>
<comment type="induction">
    <text evidence="4">Induced by paraquat, a chemical causing production of reactive oxygen species (ROS).</text>
</comment>
<comment type="similarity">
    <text evidence="1 2">Belongs to the globin family.</text>
</comment>
<accession>Q19601</accession>
<feature type="chain" id="PRO_0000457800" description="Globin-related protein glb-13">
    <location>
        <begin position="1"/>
        <end position="282"/>
    </location>
</feature>
<feature type="domain" description="Globin" evidence="1">
    <location>
        <begin position="100"/>
        <end position="249"/>
    </location>
</feature>
<feature type="region of interest" description="Disordered" evidence="3">
    <location>
        <begin position="1"/>
        <end position="46"/>
    </location>
</feature>
<feature type="compositionally biased region" description="Basic and acidic residues" evidence="3">
    <location>
        <begin position="13"/>
        <end position="23"/>
    </location>
</feature>
<feature type="compositionally biased region" description="Polar residues" evidence="3">
    <location>
        <begin position="28"/>
        <end position="41"/>
    </location>
</feature>
<feature type="binding site" description="distal binding residue" evidence="1">
    <location>
        <position position="162"/>
    </location>
    <ligand>
        <name>heme b</name>
        <dbReference type="ChEBI" id="CHEBI:60344"/>
    </ligand>
    <ligandPart>
        <name>Fe</name>
        <dbReference type="ChEBI" id="CHEBI:18248"/>
    </ligandPart>
</feature>
<feature type="binding site" description="proximal binding residue" evidence="1">
    <location>
        <position position="194"/>
    </location>
    <ligand>
        <name>heme b</name>
        <dbReference type="ChEBI" id="CHEBI:60344"/>
    </ligand>
    <ligandPart>
        <name>Fe</name>
        <dbReference type="ChEBI" id="CHEBI:18248"/>
    </ligandPart>
</feature>
<proteinExistence type="evidence at transcript level"/>
<gene>
    <name evidence="7" type="primary">glb-13</name>
    <name evidence="7" type="ORF">F19H6.2</name>
</gene>
<name>GLB13_CAEEL</name>
<organism evidence="6">
    <name type="scientific">Caenorhabditis elegans</name>
    <dbReference type="NCBI Taxonomy" id="6239"/>
    <lineage>
        <taxon>Eukaryota</taxon>
        <taxon>Metazoa</taxon>
        <taxon>Ecdysozoa</taxon>
        <taxon>Nematoda</taxon>
        <taxon>Chromadorea</taxon>
        <taxon>Rhabditida</taxon>
        <taxon>Rhabditina</taxon>
        <taxon>Rhabditomorpha</taxon>
        <taxon>Rhabditoidea</taxon>
        <taxon>Rhabditidae</taxon>
        <taxon>Peloderinae</taxon>
        <taxon>Caenorhabditis</taxon>
    </lineage>
</organism>